<accession>Q196T6</accession>
<reference key="1">
    <citation type="journal article" date="2006" name="J. Virol.">
        <title>Genome of invertebrate iridescent virus type 3 (mosquito iridescent virus).</title>
        <authorList>
            <person name="Delhon G."/>
            <person name="Tulman E.R."/>
            <person name="Afonso C.L."/>
            <person name="Lu Z."/>
            <person name="Becnel J.J."/>
            <person name="Moser B.A."/>
            <person name="Kutish G.F."/>
            <person name="Rock D.L."/>
        </authorList>
    </citation>
    <scope>NUCLEOTIDE SEQUENCE [LARGE SCALE GENOMIC DNA]</scope>
</reference>
<feature type="chain" id="PRO_0000377821" description="Uncharacterized protein 124R">
    <location>
        <begin position="1"/>
        <end position="236"/>
    </location>
</feature>
<feature type="transmembrane region" description="Helical" evidence="1">
    <location>
        <begin position="15"/>
        <end position="34"/>
    </location>
</feature>
<feature type="region of interest" description="Disordered" evidence="2">
    <location>
        <begin position="83"/>
        <end position="113"/>
    </location>
</feature>
<feature type="region of interest" description="Disordered" evidence="2">
    <location>
        <begin position="185"/>
        <end position="236"/>
    </location>
</feature>
<feature type="coiled-coil region" evidence="1">
    <location>
        <begin position="36"/>
        <end position="71"/>
    </location>
</feature>
<feature type="compositionally biased region" description="Polar residues" evidence="2">
    <location>
        <begin position="93"/>
        <end position="102"/>
    </location>
</feature>
<feature type="compositionally biased region" description="Polar residues" evidence="2">
    <location>
        <begin position="185"/>
        <end position="195"/>
    </location>
</feature>
<feature type="compositionally biased region" description="Basic and acidic residues" evidence="2">
    <location>
        <begin position="225"/>
        <end position="236"/>
    </location>
</feature>
<organismHost>
    <name type="scientific">Aedes vexans</name>
    <name type="common">Inland floodwater mosquito</name>
    <name type="synonym">Culex vexans</name>
    <dbReference type="NCBI Taxonomy" id="7163"/>
</organismHost>
<organismHost>
    <name type="scientific">Culex territans</name>
    <dbReference type="NCBI Taxonomy" id="42431"/>
</organismHost>
<organismHost>
    <name type="scientific">Culiseta annulata</name>
    <dbReference type="NCBI Taxonomy" id="332058"/>
</organismHost>
<organismHost>
    <name type="scientific">Ochlerotatus sollicitans</name>
    <name type="common">eastern saltmarsh mosquito</name>
    <dbReference type="NCBI Taxonomy" id="310513"/>
</organismHost>
<organismHost>
    <name type="scientific">Ochlerotatus taeniorhynchus</name>
    <name type="common">Black salt marsh mosquito</name>
    <name type="synonym">Aedes taeniorhynchus</name>
    <dbReference type="NCBI Taxonomy" id="329105"/>
</organismHost>
<organismHost>
    <name type="scientific">Psorophora ferox</name>
    <dbReference type="NCBI Taxonomy" id="7183"/>
</organismHost>
<comment type="subcellular location">
    <subcellularLocation>
        <location evidence="3">Membrane</location>
        <topology evidence="3">Single-pass membrane protein</topology>
    </subcellularLocation>
</comment>
<keyword id="KW-0175">Coiled coil</keyword>
<keyword id="KW-0472">Membrane</keyword>
<keyword id="KW-1185">Reference proteome</keyword>
<keyword id="KW-0812">Transmembrane</keyword>
<keyword id="KW-1133">Transmembrane helix</keyword>
<dbReference type="EMBL" id="DQ643392">
    <property type="protein sequence ID" value="ABF82154.1"/>
    <property type="molecule type" value="Genomic_DNA"/>
</dbReference>
<dbReference type="RefSeq" id="YP_654696.1">
    <property type="nucleotide sequence ID" value="NC_008187.1"/>
</dbReference>
<dbReference type="SMR" id="Q196T6"/>
<dbReference type="KEGG" id="vg:4156335"/>
<dbReference type="OrthoDB" id="28203at10239"/>
<dbReference type="Proteomes" id="UP000001358">
    <property type="component" value="Genome"/>
</dbReference>
<dbReference type="GO" id="GO:0016020">
    <property type="term" value="C:membrane"/>
    <property type="evidence" value="ECO:0007669"/>
    <property type="project" value="UniProtKB-SubCell"/>
</dbReference>
<sequence>MESTDVNHSTAWAPGGMAHIISEAVIAGSIGLYFWKKISALEQTVQELQSQLEVQNNQLQWLIQQQTRRLAVSPLAVSPLAVSPLPPQRDYRQQSTTTNAAGNNGAYPSFQFKPPKTAIKGDAAPPQATPKMQCDNGVCKLVRPLQATHGKGARAPSPEKKTVSISKIAKQIEFEHDQIAPARTATTQVSTFSKPSPNPVLRSITPNPSIGEGRDGDESGPSARALDKILNDIDCE</sequence>
<gene>
    <name type="ORF">IIV3-124R</name>
</gene>
<name>124R_IIV3</name>
<evidence type="ECO:0000255" key="1"/>
<evidence type="ECO:0000256" key="2">
    <source>
        <dbReference type="SAM" id="MobiDB-lite"/>
    </source>
</evidence>
<evidence type="ECO:0000305" key="3"/>
<organism>
    <name type="scientific">Invertebrate iridescent virus 3</name>
    <name type="common">IIV-3</name>
    <name type="synonym">Mosquito iridescent virus</name>
    <dbReference type="NCBI Taxonomy" id="345201"/>
    <lineage>
        <taxon>Viruses</taxon>
        <taxon>Varidnaviria</taxon>
        <taxon>Bamfordvirae</taxon>
        <taxon>Nucleocytoviricota</taxon>
        <taxon>Megaviricetes</taxon>
        <taxon>Pimascovirales</taxon>
        <taxon>Iridoviridae</taxon>
        <taxon>Betairidovirinae</taxon>
        <taxon>Chloriridovirus</taxon>
    </lineage>
</organism>
<proteinExistence type="predicted"/>
<protein>
    <recommendedName>
        <fullName>Uncharacterized protein 124R</fullName>
    </recommendedName>
</protein>